<reference key="1">
    <citation type="submission" date="2007-05" db="EMBL/GenBank/DDBJ databases">
        <title>Complete sequence of chromosome of Staphylococcus aureus subsp. aureus JH9.</title>
        <authorList>
            <consortium name="US DOE Joint Genome Institute"/>
            <person name="Copeland A."/>
            <person name="Lucas S."/>
            <person name="Lapidus A."/>
            <person name="Barry K."/>
            <person name="Detter J.C."/>
            <person name="Glavina del Rio T."/>
            <person name="Hammon N."/>
            <person name="Israni S."/>
            <person name="Pitluck S."/>
            <person name="Chain P."/>
            <person name="Malfatti S."/>
            <person name="Shin M."/>
            <person name="Vergez L."/>
            <person name="Schmutz J."/>
            <person name="Larimer F."/>
            <person name="Land M."/>
            <person name="Hauser L."/>
            <person name="Kyrpides N."/>
            <person name="Kim E."/>
            <person name="Tomasz A."/>
            <person name="Richardson P."/>
        </authorList>
    </citation>
    <scope>NUCLEOTIDE SEQUENCE [LARGE SCALE GENOMIC DNA]</scope>
    <source>
        <strain>JH9</strain>
    </source>
</reference>
<accession>A5IRC7</accession>
<sequence>MIESNMLVLTLVIPVITAILLVFIGKRPIIKRYVALGGTLLTLVAAIINLANVVKHGPIRVELGSWKAPYSIVFVLDIFSALLIITSIIITAIVILYSYQTIGIERERYYYYFSVLFMLIGIIGAFTTGDIFNLFVFFEVFLMSSYFLLVIGSTKIQLQETIKYVLVNVVSSSFFVMGVAILYSVVGTLNLADISNKLANLSAHDSGLVNIVFILFIFVFATKAGVFPMFVWLPSAYYAPPIPIIAFFGALLTKVGVYAIARTLSLFFSDNVSFSHYVILFLALLTIIFGCVGAVAYANIKKIILYNVMIAVGVILVGVAMMTESGMIGAIYYTLHDMLVKLALFLLIGIMIKITGTADLRQFGGLIKRYPVLGWSFFIAALSLAGIPPLSGFYGKFFIVQSTFERGFYLSGVIVLLSSLVVLYSVIRIFLQGFFGQPKGYDLNNKVDVKYLTTIAIVAVVITVLYGLSADYLYPMVKAGAETFYNPSTYVKAVLGGK</sequence>
<comment type="function">
    <text evidence="1">Mnh complex is a Na(+)/H(+) antiporter involved in Na(+) excretion.</text>
</comment>
<comment type="subunit">
    <text evidence="1">May form a heterooligomeric complex that consists of seven subunits: mnhA1, mnhB1, mnhC1, mnhD1, mnhE1, mnhF1 and mnhG1.</text>
</comment>
<comment type="subcellular location">
    <subcellularLocation>
        <location evidence="3">Cell membrane</location>
        <topology evidence="3">Multi-pass membrane protein</topology>
    </subcellularLocation>
</comment>
<comment type="similarity">
    <text evidence="3">Belongs to the CPA3 antiporters (TC 2.A.63) subunit D family.</text>
</comment>
<evidence type="ECO:0000250" key="1"/>
<evidence type="ECO:0000255" key="2"/>
<evidence type="ECO:0000305" key="3"/>
<keyword id="KW-0050">Antiport</keyword>
<keyword id="KW-1003">Cell membrane</keyword>
<keyword id="KW-0375">Hydrogen ion transport</keyword>
<keyword id="KW-0406">Ion transport</keyword>
<keyword id="KW-0472">Membrane</keyword>
<keyword id="KW-0915">Sodium</keyword>
<keyword id="KW-0739">Sodium transport</keyword>
<keyword id="KW-0812">Transmembrane</keyword>
<keyword id="KW-1133">Transmembrane helix</keyword>
<keyword id="KW-0813">Transport</keyword>
<protein>
    <recommendedName>
        <fullName>Na(+)/H(+) antiporter subunit D1</fullName>
    </recommendedName>
    <alternativeName>
        <fullName>Mnh complex subunit D1</fullName>
    </alternativeName>
</protein>
<name>MNHD1_STAA9</name>
<organism>
    <name type="scientific">Staphylococcus aureus (strain JH9)</name>
    <dbReference type="NCBI Taxonomy" id="359786"/>
    <lineage>
        <taxon>Bacteria</taxon>
        <taxon>Bacillati</taxon>
        <taxon>Bacillota</taxon>
        <taxon>Bacilli</taxon>
        <taxon>Bacillales</taxon>
        <taxon>Staphylococcaceae</taxon>
        <taxon>Staphylococcus</taxon>
    </lineage>
</organism>
<dbReference type="EMBL" id="CP000703">
    <property type="protein sequence ID" value="ABQ48750.1"/>
    <property type="molecule type" value="Genomic_DNA"/>
</dbReference>
<dbReference type="RefSeq" id="WP_000573077.1">
    <property type="nucleotide sequence ID" value="NC_009487.1"/>
</dbReference>
<dbReference type="SMR" id="A5IRC7"/>
<dbReference type="KEGG" id="saj:SaurJH9_0949"/>
<dbReference type="HOGENOM" id="CLU_007100_9_2_9"/>
<dbReference type="GO" id="GO:0005886">
    <property type="term" value="C:plasma membrane"/>
    <property type="evidence" value="ECO:0007669"/>
    <property type="project" value="UniProtKB-SubCell"/>
</dbReference>
<dbReference type="GO" id="GO:0008137">
    <property type="term" value="F:NADH dehydrogenase (ubiquinone) activity"/>
    <property type="evidence" value="ECO:0007669"/>
    <property type="project" value="InterPro"/>
</dbReference>
<dbReference type="GO" id="GO:0015386">
    <property type="term" value="F:potassium:proton antiporter activity"/>
    <property type="evidence" value="ECO:0007669"/>
    <property type="project" value="InterPro"/>
</dbReference>
<dbReference type="GO" id="GO:0042773">
    <property type="term" value="P:ATP synthesis coupled electron transport"/>
    <property type="evidence" value="ECO:0007669"/>
    <property type="project" value="InterPro"/>
</dbReference>
<dbReference type="GO" id="GO:0006814">
    <property type="term" value="P:sodium ion transport"/>
    <property type="evidence" value="ECO:0007669"/>
    <property type="project" value="UniProtKB-KW"/>
</dbReference>
<dbReference type="InterPro" id="IPR050586">
    <property type="entry name" value="CPA3_Na-H_Antiporter_D"/>
</dbReference>
<dbReference type="InterPro" id="IPR004775">
    <property type="entry name" value="MnhD1"/>
</dbReference>
<dbReference type="InterPro" id="IPR003918">
    <property type="entry name" value="NADH_UbQ_OxRdtase"/>
</dbReference>
<dbReference type="InterPro" id="IPR001750">
    <property type="entry name" value="ND/Mrp_TM"/>
</dbReference>
<dbReference type="NCBIfam" id="TIGR00944">
    <property type="entry name" value="2a6301s04"/>
    <property type="match status" value="1"/>
</dbReference>
<dbReference type="NCBIfam" id="NF005818">
    <property type="entry name" value="PRK07691.1"/>
    <property type="match status" value="1"/>
</dbReference>
<dbReference type="PANTHER" id="PTHR42703:SF1">
    <property type="entry name" value="NA(+)_H(+) ANTIPORTER SUBUNIT D1"/>
    <property type="match status" value="1"/>
</dbReference>
<dbReference type="PANTHER" id="PTHR42703">
    <property type="entry name" value="NADH DEHYDROGENASE"/>
    <property type="match status" value="1"/>
</dbReference>
<dbReference type="Pfam" id="PF00361">
    <property type="entry name" value="Proton_antipo_M"/>
    <property type="match status" value="1"/>
</dbReference>
<dbReference type="PRINTS" id="PR01437">
    <property type="entry name" value="NUOXDRDTASE4"/>
</dbReference>
<proteinExistence type="inferred from homology"/>
<feature type="chain" id="PRO_0000372131" description="Na(+)/H(+) antiporter subunit D1">
    <location>
        <begin position="1"/>
        <end position="498"/>
    </location>
</feature>
<feature type="transmembrane region" description="Helical" evidence="2">
    <location>
        <begin position="5"/>
        <end position="25"/>
    </location>
</feature>
<feature type="transmembrane region" description="Helical" evidence="2">
    <location>
        <begin position="34"/>
        <end position="54"/>
    </location>
</feature>
<feature type="transmembrane region" description="Helical" evidence="2">
    <location>
        <begin position="75"/>
        <end position="95"/>
    </location>
</feature>
<feature type="transmembrane region" description="Helical" evidence="2">
    <location>
        <begin position="109"/>
        <end position="129"/>
    </location>
</feature>
<feature type="transmembrane region" description="Helical" evidence="2">
    <location>
        <begin position="131"/>
        <end position="151"/>
    </location>
</feature>
<feature type="transmembrane region" description="Helical" evidence="2">
    <location>
        <begin position="169"/>
        <end position="189"/>
    </location>
</feature>
<feature type="transmembrane region" description="Helical" evidence="2">
    <location>
        <begin position="211"/>
        <end position="231"/>
    </location>
</feature>
<feature type="transmembrane region" description="Helical" evidence="2">
    <location>
        <begin position="241"/>
        <end position="261"/>
    </location>
</feature>
<feature type="transmembrane region" description="Helical" evidence="2">
    <location>
        <begin position="278"/>
        <end position="298"/>
    </location>
</feature>
<feature type="transmembrane region" description="Helical" evidence="2">
    <location>
        <begin position="303"/>
        <end position="323"/>
    </location>
</feature>
<feature type="transmembrane region" description="Helical" evidence="2">
    <location>
        <begin position="338"/>
        <end position="358"/>
    </location>
</feature>
<feature type="transmembrane region" description="Helical" evidence="2">
    <location>
        <begin position="373"/>
        <end position="393"/>
    </location>
</feature>
<feature type="transmembrane region" description="Helical" evidence="2">
    <location>
        <begin position="407"/>
        <end position="427"/>
    </location>
</feature>
<feature type="transmembrane region" description="Helical" evidence="2">
    <location>
        <begin position="455"/>
        <end position="475"/>
    </location>
</feature>
<gene>
    <name type="primary">mnhD1</name>
    <name type="ordered locus">SaurJH9_0949</name>
</gene>